<proteinExistence type="inferred from homology"/>
<protein>
    <recommendedName>
        <fullName>Blue-light-activated histidine kinase</fullName>
        <ecNumber>2.7.13.3</ecNumber>
    </recommendedName>
</protein>
<dbReference type="EC" id="2.7.13.3"/>
<dbReference type="EMBL" id="AE017224">
    <property type="protein sequence ID" value="AAX76047.1"/>
    <property type="status" value="ALT_INIT"/>
    <property type="molecule type" value="Genomic_DNA"/>
</dbReference>
<dbReference type="RefSeq" id="WP_002971240.1">
    <property type="nucleotide sequence ID" value="NC_006933.1"/>
</dbReference>
<dbReference type="SMR" id="Q577Y7"/>
<dbReference type="EnsemblBacteria" id="AAX76047">
    <property type="protein sequence ID" value="AAX76047"/>
    <property type="gene ID" value="BruAb2_0636"/>
</dbReference>
<dbReference type="KEGG" id="bmb:BruAb2_0636"/>
<dbReference type="HOGENOM" id="CLU_000445_114_57_5"/>
<dbReference type="Proteomes" id="UP000000540">
    <property type="component" value="Chromosome II"/>
</dbReference>
<dbReference type="GO" id="GO:0005524">
    <property type="term" value="F:ATP binding"/>
    <property type="evidence" value="ECO:0007669"/>
    <property type="project" value="UniProtKB-KW"/>
</dbReference>
<dbReference type="GO" id="GO:0009881">
    <property type="term" value="F:photoreceptor activity"/>
    <property type="evidence" value="ECO:0007669"/>
    <property type="project" value="UniProtKB-KW"/>
</dbReference>
<dbReference type="GO" id="GO:0004673">
    <property type="term" value="F:protein histidine kinase activity"/>
    <property type="evidence" value="ECO:0007669"/>
    <property type="project" value="UniProtKB-EC"/>
</dbReference>
<dbReference type="CDD" id="cd00130">
    <property type="entry name" value="PAS"/>
    <property type="match status" value="2"/>
</dbReference>
<dbReference type="Gene3D" id="2.10.70.100">
    <property type="match status" value="1"/>
</dbReference>
<dbReference type="Gene3D" id="3.30.450.20">
    <property type="entry name" value="PAS domain"/>
    <property type="match status" value="2"/>
</dbReference>
<dbReference type="InterPro" id="IPR001610">
    <property type="entry name" value="PAC"/>
</dbReference>
<dbReference type="InterPro" id="IPR000014">
    <property type="entry name" value="PAS"/>
</dbReference>
<dbReference type="InterPro" id="IPR000700">
    <property type="entry name" value="PAS-assoc_C"/>
</dbReference>
<dbReference type="InterPro" id="IPR035965">
    <property type="entry name" value="PAS-like_dom_sf"/>
</dbReference>
<dbReference type="InterPro" id="IPR013655">
    <property type="entry name" value="PAS_fold_3"/>
</dbReference>
<dbReference type="InterPro" id="IPR011102">
    <property type="entry name" value="Sig_transdc_His_kinase_HWE"/>
</dbReference>
<dbReference type="NCBIfam" id="TIGR00229">
    <property type="entry name" value="sensory_box"/>
    <property type="match status" value="2"/>
</dbReference>
<dbReference type="PANTHER" id="PTHR41523:SF7">
    <property type="entry name" value="HISTIDINE KINASE"/>
    <property type="match status" value="1"/>
</dbReference>
<dbReference type="PANTHER" id="PTHR41523">
    <property type="entry name" value="TWO-COMPONENT SYSTEM SENSOR PROTEIN"/>
    <property type="match status" value="1"/>
</dbReference>
<dbReference type="Pfam" id="PF07536">
    <property type="entry name" value="HWE_HK"/>
    <property type="match status" value="1"/>
</dbReference>
<dbReference type="Pfam" id="PF08447">
    <property type="entry name" value="PAS_3"/>
    <property type="match status" value="1"/>
</dbReference>
<dbReference type="Pfam" id="PF13426">
    <property type="entry name" value="PAS_9"/>
    <property type="match status" value="1"/>
</dbReference>
<dbReference type="SMART" id="SM00911">
    <property type="entry name" value="HWE_HK"/>
    <property type="match status" value="1"/>
</dbReference>
<dbReference type="SMART" id="SM00086">
    <property type="entry name" value="PAC"/>
    <property type="match status" value="2"/>
</dbReference>
<dbReference type="SMART" id="SM00091">
    <property type="entry name" value="PAS"/>
    <property type="match status" value="2"/>
</dbReference>
<dbReference type="SUPFAM" id="SSF55785">
    <property type="entry name" value="PYP-like sensor domain (PAS domain)"/>
    <property type="match status" value="2"/>
</dbReference>
<dbReference type="PROSITE" id="PS50113">
    <property type="entry name" value="PAC"/>
    <property type="match status" value="2"/>
</dbReference>
<dbReference type="PROSITE" id="PS50112">
    <property type="entry name" value="PAS"/>
    <property type="match status" value="1"/>
</dbReference>
<keyword id="KW-0067">ATP-binding</keyword>
<keyword id="KW-0157">Chromophore</keyword>
<keyword id="KW-0285">Flavoprotein</keyword>
<keyword id="KW-0288">FMN</keyword>
<keyword id="KW-0418">Kinase</keyword>
<keyword id="KW-0547">Nucleotide-binding</keyword>
<keyword id="KW-0597">Phosphoprotein</keyword>
<keyword id="KW-0600">Photoreceptor protein</keyword>
<keyword id="KW-0675">Receptor</keyword>
<keyword id="KW-0677">Repeat</keyword>
<keyword id="KW-0716">Sensory transduction</keyword>
<keyword id="KW-0808">Transferase</keyword>
<keyword id="KW-0843">Virulence</keyword>
<reference key="1">
    <citation type="journal article" date="2005" name="J. Bacteriol.">
        <title>Completion of the genome sequence of Brucella abortus and comparison to the highly similar genomes of Brucella melitensis and Brucella suis.</title>
        <authorList>
            <person name="Halling S.M."/>
            <person name="Peterson-Burch B.D."/>
            <person name="Bricker B.J."/>
            <person name="Zuerner R.L."/>
            <person name="Qing Z."/>
            <person name="Li L.-L."/>
            <person name="Kapur V."/>
            <person name="Alt D.P."/>
            <person name="Olsen S.C."/>
        </authorList>
    </citation>
    <scope>NUCLEOTIDE SEQUENCE [LARGE SCALE GENOMIC DNA]</scope>
    <source>
        <strain>9-941</strain>
    </source>
</reference>
<comment type="function">
    <text evidence="1">Photosensitive kinase that is involved in increased bacterial virulence upon exposure to light. Once ejected from an infected animal host, sunlight acts as an environmental signal that increases the virulence of the bacterium, preparing it for infection of the next host. This photoreceptor protein is directly related to the bacterium's survival and replication within host macrophages (By similarity).</text>
</comment>
<comment type="catalytic activity">
    <reaction>
        <text>ATP + protein L-histidine = ADP + protein N-phospho-L-histidine.</text>
        <dbReference type="EC" id="2.7.13.3"/>
    </reaction>
</comment>
<comment type="PTM">
    <text evidence="1">FMN binds covalently to cysteine after exposure to blue light and this bond is spontaneously broken in the dark.</text>
</comment>
<comment type="sequence caution" evidence="4">
    <conflict type="erroneous initiation">
        <sequence resource="EMBL-CDS" id="AAX76047"/>
    </conflict>
</comment>
<evidence type="ECO:0000250" key="1"/>
<evidence type="ECO:0000255" key="2">
    <source>
        <dbReference type="PROSITE-ProRule" id="PRU00140"/>
    </source>
</evidence>
<evidence type="ECO:0000255" key="3">
    <source>
        <dbReference type="PROSITE-ProRule" id="PRU00141"/>
    </source>
</evidence>
<evidence type="ECO:0000305" key="4"/>
<name>LOVHK_BRUAB</name>
<organism>
    <name type="scientific">Brucella abortus biovar 1 (strain 9-941)</name>
    <dbReference type="NCBI Taxonomy" id="262698"/>
    <lineage>
        <taxon>Bacteria</taxon>
        <taxon>Pseudomonadati</taxon>
        <taxon>Pseudomonadota</taxon>
        <taxon>Alphaproteobacteria</taxon>
        <taxon>Hyphomicrobiales</taxon>
        <taxon>Brucellaceae</taxon>
        <taxon>Brucella/Ochrobactrum group</taxon>
        <taxon>Brucella</taxon>
    </lineage>
</organism>
<feature type="chain" id="PRO_0000361283" description="Blue-light-activated histidine kinase">
    <location>
        <begin position="1"/>
        <end position="489"/>
    </location>
</feature>
<feature type="domain" description="PAS" evidence="2">
    <location>
        <begin position="19"/>
        <end position="93"/>
    </location>
</feature>
<feature type="domain" description="PAC 1" evidence="3">
    <location>
        <begin position="93"/>
        <end position="147"/>
    </location>
</feature>
<feature type="domain" description="PAC 2" evidence="3">
    <location>
        <begin position="232"/>
        <end position="281"/>
    </location>
</feature>
<feature type="region of interest" description="HWE histidine kinase domain">
    <location>
        <begin position="254"/>
        <end position="336"/>
    </location>
</feature>
<feature type="modified residue" description="S-4a-FMN cysteine" evidence="1">
    <location>
        <position position="69"/>
    </location>
</feature>
<feature type="modified residue" description="Phosphohistidine; by autocatalysis" evidence="1">
    <location>
        <position position="288"/>
    </location>
</feature>
<accession>Q577Y7</accession>
<sequence length="489" mass="54874">MAIDLRPFIPFGRGALSQATDPFRAAVEFTLMPMLITNPHLPDNPIVFANPAFLKLTGYEADEVMGRNCRFLQGHGTDPAHVRAIKSAIAAEKPIDIDIINYKKSGEAFWNRLHISPVHNANGRLQHFVSSQLDVTLELSRLVELEKERKTLSIETARSKDQLDYIVEVANIGFWTREFYSGKMTCSAECRRIYGFTPDEPVHFDTILDLVVLEDRMTVVQKAHQAVTGEPYSIEYRIVTRLGETRWLETRAKALTGENPLVLGIVQDVTERKKAEANKALVSREIAHRFKNSMAMVQSIANQTLRNTYDPEQANRLFSERLRALSQAHDMLLKENWAGATIQQICATALAPFNSTFANRIHMSGPHLLVSDRVTVALSLAFYELATNAVKYGALSNEKGVINITWAIMEDKGEKKFHMRWAESRGPEVMQPARRGFGQRLLHSVLAEELKAKCDVEFAASGLLIDVLAPITPEVFPGMGHNVPEQRIA</sequence>
<gene>
    <name type="ordered locus">BruAb2_0636</name>
</gene>